<feature type="chain" id="PRO_0000076392" description="UPF0313 protein RPA0679">
    <location>
        <begin position="1"/>
        <end position="677"/>
    </location>
</feature>
<feature type="domain" description="Radical SAM core" evidence="2">
    <location>
        <begin position="335"/>
        <end position="601"/>
    </location>
</feature>
<feature type="region of interest" description="Disordered" evidence="3">
    <location>
        <begin position="635"/>
        <end position="677"/>
    </location>
</feature>
<feature type="binding site" evidence="1">
    <location>
        <position position="349"/>
    </location>
    <ligand>
        <name>[4Fe-4S] cluster</name>
        <dbReference type="ChEBI" id="CHEBI:49883"/>
        <note>4Fe-4S-S-AdoMet</note>
    </ligand>
</feature>
<feature type="binding site" evidence="1">
    <location>
        <position position="353"/>
    </location>
    <ligand>
        <name>[4Fe-4S] cluster</name>
        <dbReference type="ChEBI" id="CHEBI:49883"/>
        <note>4Fe-4S-S-AdoMet</note>
    </ligand>
</feature>
<feature type="binding site" evidence="1">
    <location>
        <position position="356"/>
    </location>
    <ligand>
        <name>[4Fe-4S] cluster</name>
        <dbReference type="ChEBI" id="CHEBI:49883"/>
        <note>4Fe-4S-S-AdoMet</note>
    </ligand>
</feature>
<proteinExistence type="inferred from homology"/>
<keyword id="KW-0004">4Fe-4S</keyword>
<keyword id="KW-0408">Iron</keyword>
<keyword id="KW-0411">Iron-sulfur</keyword>
<keyword id="KW-0479">Metal-binding</keyword>
<keyword id="KW-0949">S-adenosyl-L-methionine</keyword>
<dbReference type="EMBL" id="BX572595">
    <property type="protein sequence ID" value="CAE26123.1"/>
    <property type="molecule type" value="Genomic_DNA"/>
</dbReference>
<dbReference type="RefSeq" id="WP_011156246.1">
    <property type="nucleotide sequence ID" value="NZ_CP116810.1"/>
</dbReference>
<dbReference type="STRING" id="258594.RPA0679"/>
<dbReference type="GeneID" id="66891693"/>
<dbReference type="eggNOG" id="COG1032">
    <property type="taxonomic scope" value="Bacteria"/>
</dbReference>
<dbReference type="HOGENOM" id="CLU_018288_2_0_5"/>
<dbReference type="PhylomeDB" id="P61405"/>
<dbReference type="GO" id="GO:0051539">
    <property type="term" value="F:4 iron, 4 sulfur cluster binding"/>
    <property type="evidence" value="ECO:0007669"/>
    <property type="project" value="UniProtKB-KW"/>
</dbReference>
<dbReference type="GO" id="GO:0003824">
    <property type="term" value="F:catalytic activity"/>
    <property type="evidence" value="ECO:0007669"/>
    <property type="project" value="InterPro"/>
</dbReference>
<dbReference type="GO" id="GO:0005506">
    <property type="term" value="F:iron ion binding"/>
    <property type="evidence" value="ECO:0007669"/>
    <property type="project" value="UniProtKB-UniRule"/>
</dbReference>
<dbReference type="Gene3D" id="3.80.30.20">
    <property type="entry name" value="tm_1862 like domain"/>
    <property type="match status" value="1"/>
</dbReference>
<dbReference type="HAMAP" id="MF_01251">
    <property type="entry name" value="UPF0313"/>
    <property type="match status" value="1"/>
</dbReference>
<dbReference type="InterPro" id="IPR006638">
    <property type="entry name" value="Elp3/MiaA/NifB-like_rSAM"/>
</dbReference>
<dbReference type="InterPro" id="IPR020612">
    <property type="entry name" value="Methylthiotransferase_CS"/>
</dbReference>
<dbReference type="InterPro" id="IPR007197">
    <property type="entry name" value="rSAM"/>
</dbReference>
<dbReference type="InterPro" id="IPR023404">
    <property type="entry name" value="rSAM_horseshoe"/>
</dbReference>
<dbReference type="InterPro" id="IPR022946">
    <property type="entry name" value="UPF0313"/>
</dbReference>
<dbReference type="InterPro" id="IPR024560">
    <property type="entry name" value="UPF0313_C"/>
</dbReference>
<dbReference type="InterPro" id="IPR013704">
    <property type="entry name" value="UPF0313_N"/>
</dbReference>
<dbReference type="NCBIfam" id="TIGR03904">
    <property type="entry name" value="SAM_YgiQ"/>
    <property type="match status" value="1"/>
</dbReference>
<dbReference type="PANTHER" id="PTHR32331">
    <property type="entry name" value="UPF0313 PROTEIN YGIQ"/>
    <property type="match status" value="1"/>
</dbReference>
<dbReference type="PANTHER" id="PTHR32331:SF0">
    <property type="entry name" value="UPF0313 PROTEIN YGIQ"/>
    <property type="match status" value="1"/>
</dbReference>
<dbReference type="Pfam" id="PF11842">
    <property type="entry name" value="DUF3362"/>
    <property type="match status" value="1"/>
</dbReference>
<dbReference type="Pfam" id="PF04055">
    <property type="entry name" value="Radical_SAM"/>
    <property type="match status" value="1"/>
</dbReference>
<dbReference type="Pfam" id="PF08497">
    <property type="entry name" value="Radical_SAM_N"/>
    <property type="match status" value="1"/>
</dbReference>
<dbReference type="SFLD" id="SFLDG01082">
    <property type="entry name" value="B12-binding_domain_containing"/>
    <property type="match status" value="1"/>
</dbReference>
<dbReference type="SFLD" id="SFLDS00029">
    <property type="entry name" value="Radical_SAM"/>
    <property type="match status" value="1"/>
</dbReference>
<dbReference type="SFLD" id="SFLDG01069">
    <property type="entry name" value="UPF0313"/>
    <property type="match status" value="1"/>
</dbReference>
<dbReference type="SMART" id="SM00729">
    <property type="entry name" value="Elp3"/>
    <property type="match status" value="1"/>
</dbReference>
<dbReference type="SUPFAM" id="SSF102114">
    <property type="entry name" value="Radical SAM enzymes"/>
    <property type="match status" value="1"/>
</dbReference>
<dbReference type="PROSITE" id="PS51918">
    <property type="entry name" value="RADICAL_SAM"/>
    <property type="match status" value="1"/>
</dbReference>
<accession>P61405</accession>
<reference key="1">
    <citation type="journal article" date="2004" name="Nat. Biotechnol.">
        <title>Complete genome sequence of the metabolically versatile photosynthetic bacterium Rhodopseudomonas palustris.</title>
        <authorList>
            <person name="Larimer F.W."/>
            <person name="Chain P."/>
            <person name="Hauser L."/>
            <person name="Lamerdin J.E."/>
            <person name="Malfatti S."/>
            <person name="Do L."/>
            <person name="Land M.L."/>
            <person name="Pelletier D.A."/>
            <person name="Beatty J.T."/>
            <person name="Lang A.S."/>
            <person name="Tabita F.R."/>
            <person name="Gibson J.L."/>
            <person name="Hanson T.E."/>
            <person name="Bobst C."/>
            <person name="Torres y Torres J.L."/>
            <person name="Peres C."/>
            <person name="Harrison F.H."/>
            <person name="Gibson J."/>
            <person name="Harwood C.S."/>
        </authorList>
    </citation>
    <scope>NUCLEOTIDE SEQUENCE [LARGE SCALE GENOMIC DNA]</scope>
    <source>
        <strain>ATCC BAA-98 / CGA009</strain>
    </source>
</reference>
<organism>
    <name type="scientific">Rhodopseudomonas palustris (strain ATCC BAA-98 / CGA009)</name>
    <dbReference type="NCBI Taxonomy" id="258594"/>
    <lineage>
        <taxon>Bacteria</taxon>
        <taxon>Pseudomonadati</taxon>
        <taxon>Pseudomonadota</taxon>
        <taxon>Alphaproteobacteria</taxon>
        <taxon>Hyphomicrobiales</taxon>
        <taxon>Nitrobacteraceae</taxon>
        <taxon>Rhodopseudomonas</taxon>
    </lineage>
</organism>
<comment type="cofactor">
    <cofactor evidence="1">
        <name>[4Fe-4S] cluster</name>
        <dbReference type="ChEBI" id="CHEBI:49883"/>
    </cofactor>
    <text evidence="1">Binds 1 [4Fe-4S] cluster. The cluster is coordinated with 3 cysteines and an exchangeable S-adenosyl-L-methionine.</text>
</comment>
<comment type="similarity">
    <text evidence="1">Belongs to the UPF0313 family.</text>
</comment>
<gene>
    <name type="ordered locus">RPA0679</name>
</gene>
<evidence type="ECO:0000255" key="1">
    <source>
        <dbReference type="HAMAP-Rule" id="MF_01251"/>
    </source>
</evidence>
<evidence type="ECO:0000255" key="2">
    <source>
        <dbReference type="PROSITE-ProRule" id="PRU01266"/>
    </source>
</evidence>
<evidence type="ECO:0000256" key="3">
    <source>
        <dbReference type="SAM" id="MobiDB-lite"/>
    </source>
</evidence>
<protein>
    <recommendedName>
        <fullName evidence="1">UPF0313 protein RPA0679</fullName>
    </recommendedName>
</protein>
<sequence length="677" mass="75657">MQTSTEVVPPLMSRFRPSAAPRKPAPFLPMSRAEMDKLGWDACDIVLVTGDAYVDHPSFGMAIIGRLLESQGFRVGIISQPDWQSAEPFKALGKPRVFFGVTGGNMDSMVNRYTADRRLRHDDAYTPNGEGGKRPDRCTLVYAQRCREAFKDVPIILGGIEASLRRIAHYDYWSDKVRRSVLADAKADLLLYGNAERAVIEVAHRLAAGEAPRELEDIRGVALFRRVPENTIELHADDLDAADEGARQVRGDVVIRLPSCEQVEQDKEAYARASRVLHRESNPGNARPLVQRHGDRDLWLNPPPIPLTTEEMDSVYDLPYARAPHPSYGNAKIPAWDMIKTSVTIMRGCFGGCTFCSITEHEGRIIQSRSEASILQEIEKIRDKTPGFTGVISDIGGPTANMYRMACKDSNIESSCRKPSCVFPDICPNLNTSHDDLIRLYRKVREVKGIKRVMVASGVRYDLAVKSPAYIKELVSHHVGGYLKIAPEHTERGPLDKMMKPGIGTYHRFKQMFEAAAKQAGKQYYLIPYFIAAHPGTTDEDMMNLALWLKRNRYRADQVQTFLPSPMATATAMYHSGVNPLRGVRHGASEPVEAIKGLRQRRLHKAFLRYHDPDNWPVLREALKAMGRADLIGSRPDQLVPAHQPPGTGKAAGTRRPVRGDGPKPQRFTTKGVRLVK</sequence>
<name>Y679_RHOPA</name>